<gene>
    <name evidence="1" type="primary">hslU</name>
    <name type="ordered locus">lwe1296</name>
</gene>
<reference key="1">
    <citation type="journal article" date="2006" name="J. Bacteriol.">
        <title>Whole-genome sequence of Listeria welshimeri reveals common steps in genome reduction with Listeria innocua as compared to Listeria monocytogenes.</title>
        <authorList>
            <person name="Hain T."/>
            <person name="Steinweg C."/>
            <person name="Kuenne C.T."/>
            <person name="Billion A."/>
            <person name="Ghai R."/>
            <person name="Chatterjee S.S."/>
            <person name="Domann E."/>
            <person name="Kaerst U."/>
            <person name="Goesmann A."/>
            <person name="Bekel T."/>
            <person name="Bartels D."/>
            <person name="Kaiser O."/>
            <person name="Meyer F."/>
            <person name="Puehler A."/>
            <person name="Weisshaar B."/>
            <person name="Wehland J."/>
            <person name="Liang C."/>
            <person name="Dandekar T."/>
            <person name="Lampidis R."/>
            <person name="Kreft J."/>
            <person name="Goebel W."/>
            <person name="Chakraborty T."/>
        </authorList>
    </citation>
    <scope>NUCLEOTIDE SEQUENCE [LARGE SCALE GENOMIC DNA]</scope>
    <source>
        <strain>ATCC 35897 / DSM 20650 / CCUG 15529 / CIP 8149 / NCTC 11857 / SLCC 5334 / V8</strain>
    </source>
</reference>
<evidence type="ECO:0000255" key="1">
    <source>
        <dbReference type="HAMAP-Rule" id="MF_00249"/>
    </source>
</evidence>
<comment type="function">
    <text evidence="1">ATPase subunit of a proteasome-like degradation complex; this subunit has chaperone activity. The binding of ATP and its subsequent hydrolysis by HslU are essential for unfolding of protein substrates subsequently hydrolyzed by HslV. HslU recognizes the N-terminal part of its protein substrates and unfolds these before they are guided to HslV for hydrolysis.</text>
</comment>
<comment type="subunit">
    <text evidence="1">A double ring-shaped homohexamer of HslV is capped on each side by a ring-shaped HslU homohexamer. The assembly of the HslU/HslV complex is dependent on binding of ATP.</text>
</comment>
<comment type="subcellular location">
    <subcellularLocation>
        <location evidence="1">Cytoplasm</location>
    </subcellularLocation>
</comment>
<comment type="similarity">
    <text evidence="1">Belongs to the ClpX chaperone family. HslU subfamily.</text>
</comment>
<protein>
    <recommendedName>
        <fullName evidence="1">ATP-dependent protease ATPase subunit HslU</fullName>
    </recommendedName>
    <alternativeName>
        <fullName evidence="1">Unfoldase HslU</fullName>
    </alternativeName>
</protein>
<name>HSLU_LISW6</name>
<proteinExistence type="inferred from homology"/>
<sequence length="469" mass="53225">MTNLTLMNQLTPKQIVEKLDQYIIGQTGAKKSVAVALRNRYRRQLMDESIRDEIIPKNILMIGPTGVGKTEIARRIAKIVRAPFSKVEATKFTEVGYVGRDVESMVRDLVEVSVRLVKEEKMQLVRVKAEKNAEKRLIKLLAPSQKKKQTTTQNPIEALFGGMNQSEETTEEEVDQELKNKRSQIEWRLQNGELDDEIVTVEVKEQQNPMLDMMRGAGMDQMNGMQDALSGMFPAKKKKRKVTVREAKKILFEDEASKLIDADELAAEGIHRAEQMGMIFIDEIDKIASKEGGGNAQVSREGVQRDILPIVEGSQISTKYGTVNTEYILFIAAGAFHMSKPSDLIPELQGRFPIRIELDKLTQEDFYKILTEPDNALIKQYKALLKTEGIDLIFTKEAVERIAEIAFQVNQDSDNIGARRLHTILEKLLEDLLFEAPEINMESIKVTENYVNEKLAPIMKNKDLTQFIL</sequence>
<organism>
    <name type="scientific">Listeria welshimeri serovar 6b (strain ATCC 35897 / DSM 20650 / CCUG 15529 / CIP 8149 / NCTC 11857 / SLCC 5334 / V8)</name>
    <dbReference type="NCBI Taxonomy" id="386043"/>
    <lineage>
        <taxon>Bacteria</taxon>
        <taxon>Bacillati</taxon>
        <taxon>Bacillota</taxon>
        <taxon>Bacilli</taxon>
        <taxon>Bacillales</taxon>
        <taxon>Listeriaceae</taxon>
        <taxon>Listeria</taxon>
    </lineage>
</organism>
<dbReference type="EMBL" id="AM263198">
    <property type="protein sequence ID" value="CAK20714.1"/>
    <property type="molecule type" value="Genomic_DNA"/>
</dbReference>
<dbReference type="RefSeq" id="WP_011702104.1">
    <property type="nucleotide sequence ID" value="NC_008555.1"/>
</dbReference>
<dbReference type="SMR" id="A0AI82"/>
<dbReference type="STRING" id="386043.lwe1296"/>
<dbReference type="GeneID" id="61189173"/>
<dbReference type="KEGG" id="lwe:lwe1296"/>
<dbReference type="eggNOG" id="COG1220">
    <property type="taxonomic scope" value="Bacteria"/>
</dbReference>
<dbReference type="HOGENOM" id="CLU_033123_0_0_9"/>
<dbReference type="OrthoDB" id="9804062at2"/>
<dbReference type="Proteomes" id="UP000000779">
    <property type="component" value="Chromosome"/>
</dbReference>
<dbReference type="GO" id="GO:0009376">
    <property type="term" value="C:HslUV protease complex"/>
    <property type="evidence" value="ECO:0007669"/>
    <property type="project" value="UniProtKB-UniRule"/>
</dbReference>
<dbReference type="GO" id="GO:0005524">
    <property type="term" value="F:ATP binding"/>
    <property type="evidence" value="ECO:0007669"/>
    <property type="project" value="UniProtKB-UniRule"/>
</dbReference>
<dbReference type="GO" id="GO:0016887">
    <property type="term" value="F:ATP hydrolysis activity"/>
    <property type="evidence" value="ECO:0007669"/>
    <property type="project" value="InterPro"/>
</dbReference>
<dbReference type="GO" id="GO:0008233">
    <property type="term" value="F:peptidase activity"/>
    <property type="evidence" value="ECO:0007669"/>
    <property type="project" value="InterPro"/>
</dbReference>
<dbReference type="GO" id="GO:0036402">
    <property type="term" value="F:proteasome-activating activity"/>
    <property type="evidence" value="ECO:0007669"/>
    <property type="project" value="UniProtKB-UniRule"/>
</dbReference>
<dbReference type="GO" id="GO:0043335">
    <property type="term" value="P:protein unfolding"/>
    <property type="evidence" value="ECO:0007669"/>
    <property type="project" value="UniProtKB-UniRule"/>
</dbReference>
<dbReference type="GO" id="GO:0051603">
    <property type="term" value="P:proteolysis involved in protein catabolic process"/>
    <property type="evidence" value="ECO:0007669"/>
    <property type="project" value="TreeGrafter"/>
</dbReference>
<dbReference type="CDD" id="cd19498">
    <property type="entry name" value="RecA-like_HslU"/>
    <property type="match status" value="1"/>
</dbReference>
<dbReference type="Gene3D" id="1.10.8.60">
    <property type="match status" value="1"/>
</dbReference>
<dbReference type="Gene3D" id="3.40.50.300">
    <property type="entry name" value="P-loop containing nucleotide triphosphate hydrolases"/>
    <property type="match status" value="2"/>
</dbReference>
<dbReference type="HAMAP" id="MF_00249">
    <property type="entry name" value="HslU"/>
    <property type="match status" value="1"/>
</dbReference>
<dbReference type="InterPro" id="IPR003593">
    <property type="entry name" value="AAA+_ATPase"/>
</dbReference>
<dbReference type="InterPro" id="IPR050052">
    <property type="entry name" value="ATP-dep_Clp_protease_ClpX"/>
</dbReference>
<dbReference type="InterPro" id="IPR003959">
    <property type="entry name" value="ATPase_AAA_core"/>
</dbReference>
<dbReference type="InterPro" id="IPR019489">
    <property type="entry name" value="Clp_ATPase_C"/>
</dbReference>
<dbReference type="InterPro" id="IPR004491">
    <property type="entry name" value="HslU"/>
</dbReference>
<dbReference type="InterPro" id="IPR027417">
    <property type="entry name" value="P-loop_NTPase"/>
</dbReference>
<dbReference type="NCBIfam" id="TIGR00390">
    <property type="entry name" value="hslU"/>
    <property type="match status" value="1"/>
</dbReference>
<dbReference type="NCBIfam" id="NF003544">
    <property type="entry name" value="PRK05201.1"/>
    <property type="match status" value="1"/>
</dbReference>
<dbReference type="PANTHER" id="PTHR48102">
    <property type="entry name" value="ATP-DEPENDENT CLP PROTEASE ATP-BINDING SUBUNIT CLPX-LIKE, MITOCHONDRIAL-RELATED"/>
    <property type="match status" value="1"/>
</dbReference>
<dbReference type="PANTHER" id="PTHR48102:SF3">
    <property type="entry name" value="ATP-DEPENDENT PROTEASE ATPASE SUBUNIT HSLU"/>
    <property type="match status" value="1"/>
</dbReference>
<dbReference type="Pfam" id="PF00004">
    <property type="entry name" value="AAA"/>
    <property type="match status" value="1"/>
</dbReference>
<dbReference type="Pfam" id="PF07724">
    <property type="entry name" value="AAA_2"/>
    <property type="match status" value="1"/>
</dbReference>
<dbReference type="Pfam" id="PF10431">
    <property type="entry name" value="ClpB_D2-small"/>
    <property type="match status" value="1"/>
</dbReference>
<dbReference type="SMART" id="SM00382">
    <property type="entry name" value="AAA"/>
    <property type="match status" value="1"/>
</dbReference>
<dbReference type="SMART" id="SM01086">
    <property type="entry name" value="ClpB_D2-small"/>
    <property type="match status" value="1"/>
</dbReference>
<dbReference type="SUPFAM" id="SSF52540">
    <property type="entry name" value="P-loop containing nucleoside triphosphate hydrolases"/>
    <property type="match status" value="1"/>
</dbReference>
<accession>A0AI82</accession>
<keyword id="KW-0067">ATP-binding</keyword>
<keyword id="KW-0143">Chaperone</keyword>
<keyword id="KW-0963">Cytoplasm</keyword>
<keyword id="KW-0547">Nucleotide-binding</keyword>
<feature type="chain" id="PRO_1000012758" description="ATP-dependent protease ATPase subunit HslU">
    <location>
        <begin position="1"/>
        <end position="469"/>
    </location>
</feature>
<feature type="binding site" evidence="1">
    <location>
        <position position="24"/>
    </location>
    <ligand>
        <name>ATP</name>
        <dbReference type="ChEBI" id="CHEBI:30616"/>
    </ligand>
</feature>
<feature type="binding site" evidence="1">
    <location>
        <begin position="66"/>
        <end position="71"/>
    </location>
    <ligand>
        <name>ATP</name>
        <dbReference type="ChEBI" id="CHEBI:30616"/>
    </ligand>
</feature>
<feature type="binding site" evidence="1">
    <location>
        <position position="282"/>
    </location>
    <ligand>
        <name>ATP</name>
        <dbReference type="ChEBI" id="CHEBI:30616"/>
    </ligand>
</feature>
<feature type="binding site" evidence="1">
    <location>
        <position position="347"/>
    </location>
    <ligand>
        <name>ATP</name>
        <dbReference type="ChEBI" id="CHEBI:30616"/>
    </ligand>
</feature>
<feature type="binding site" evidence="1">
    <location>
        <position position="419"/>
    </location>
    <ligand>
        <name>ATP</name>
        <dbReference type="ChEBI" id="CHEBI:30616"/>
    </ligand>
</feature>